<protein>
    <recommendedName>
        <fullName evidence="1">Large ribosomal subunit protein uL22</fullName>
    </recommendedName>
    <alternativeName>
        <fullName evidence="2">50S ribosomal protein L22</fullName>
    </alternativeName>
</protein>
<dbReference type="EMBL" id="AL591983">
    <property type="protein sequence ID" value="CAD00705.1"/>
    <property type="molecule type" value="Genomic_DNA"/>
</dbReference>
<dbReference type="PIR" id="AC1403">
    <property type="entry name" value="AC1403"/>
</dbReference>
<dbReference type="RefSeq" id="NP_466150.1">
    <property type="nucleotide sequence ID" value="NC_003210.1"/>
</dbReference>
<dbReference type="RefSeq" id="WP_003727697.1">
    <property type="nucleotide sequence ID" value="NZ_CP149495.1"/>
</dbReference>
<dbReference type="PDB" id="7NHN">
    <property type="method" value="EM"/>
    <property type="resolution" value="2.90 A"/>
    <property type="chains" value="V=1-118"/>
</dbReference>
<dbReference type="PDB" id="8A57">
    <property type="method" value="EM"/>
    <property type="resolution" value="2.30 A"/>
    <property type="chains" value="V=1-118"/>
</dbReference>
<dbReference type="PDB" id="8A5I">
    <property type="method" value="EM"/>
    <property type="resolution" value="2.30 A"/>
    <property type="chains" value="V=1-118"/>
</dbReference>
<dbReference type="PDB" id="8A63">
    <property type="method" value="EM"/>
    <property type="resolution" value="3.10 A"/>
    <property type="chains" value="V=1-118"/>
</dbReference>
<dbReference type="PDBsum" id="7NHN"/>
<dbReference type="PDBsum" id="8A57"/>
<dbReference type="PDBsum" id="8A5I"/>
<dbReference type="PDBsum" id="8A63"/>
<dbReference type="EMDB" id="EMD-12334"/>
<dbReference type="EMDB" id="EMD-15161"/>
<dbReference type="EMDB" id="EMD-15175"/>
<dbReference type="EMDB" id="EMD-15204"/>
<dbReference type="SMR" id="Q927L2"/>
<dbReference type="STRING" id="169963.gene:17595345"/>
<dbReference type="PaxDb" id="169963-lmo2627"/>
<dbReference type="EnsemblBacteria" id="CAD00705">
    <property type="protein sequence ID" value="CAD00705"/>
    <property type="gene ID" value="CAD00705"/>
</dbReference>
<dbReference type="GeneID" id="93240508"/>
<dbReference type="GeneID" id="985550"/>
<dbReference type="KEGG" id="lmo:lmo2627"/>
<dbReference type="PATRIC" id="fig|169963.11.peg.2691"/>
<dbReference type="eggNOG" id="COG0091">
    <property type="taxonomic scope" value="Bacteria"/>
</dbReference>
<dbReference type="HOGENOM" id="CLU_083987_3_3_9"/>
<dbReference type="OrthoDB" id="9805969at2"/>
<dbReference type="PhylomeDB" id="Q927L2"/>
<dbReference type="BioCyc" id="LMON169963:LMO2627-MONOMER"/>
<dbReference type="Proteomes" id="UP000000817">
    <property type="component" value="Chromosome"/>
</dbReference>
<dbReference type="GO" id="GO:0022625">
    <property type="term" value="C:cytosolic large ribosomal subunit"/>
    <property type="evidence" value="ECO:0000318"/>
    <property type="project" value="GO_Central"/>
</dbReference>
<dbReference type="GO" id="GO:0019843">
    <property type="term" value="F:rRNA binding"/>
    <property type="evidence" value="ECO:0007669"/>
    <property type="project" value="UniProtKB-UniRule"/>
</dbReference>
<dbReference type="GO" id="GO:0003735">
    <property type="term" value="F:structural constituent of ribosome"/>
    <property type="evidence" value="ECO:0000318"/>
    <property type="project" value="GO_Central"/>
</dbReference>
<dbReference type="GO" id="GO:0006412">
    <property type="term" value="P:translation"/>
    <property type="evidence" value="ECO:0000318"/>
    <property type="project" value="GO_Central"/>
</dbReference>
<dbReference type="CDD" id="cd00336">
    <property type="entry name" value="Ribosomal_L22"/>
    <property type="match status" value="1"/>
</dbReference>
<dbReference type="FunFam" id="3.90.470.10:FF:000001">
    <property type="entry name" value="50S ribosomal protein L22"/>
    <property type="match status" value="1"/>
</dbReference>
<dbReference type="Gene3D" id="3.90.470.10">
    <property type="entry name" value="Ribosomal protein L22/L17"/>
    <property type="match status" value="1"/>
</dbReference>
<dbReference type="HAMAP" id="MF_01331_B">
    <property type="entry name" value="Ribosomal_uL22_B"/>
    <property type="match status" value="1"/>
</dbReference>
<dbReference type="InterPro" id="IPR001063">
    <property type="entry name" value="Ribosomal_uL22"/>
</dbReference>
<dbReference type="InterPro" id="IPR005727">
    <property type="entry name" value="Ribosomal_uL22_bac/chlpt-type"/>
</dbReference>
<dbReference type="InterPro" id="IPR047867">
    <property type="entry name" value="Ribosomal_uL22_bac/org-type"/>
</dbReference>
<dbReference type="InterPro" id="IPR018260">
    <property type="entry name" value="Ribosomal_uL22_CS"/>
</dbReference>
<dbReference type="InterPro" id="IPR036394">
    <property type="entry name" value="Ribosomal_uL22_sf"/>
</dbReference>
<dbReference type="NCBIfam" id="TIGR01044">
    <property type="entry name" value="rplV_bact"/>
    <property type="match status" value="1"/>
</dbReference>
<dbReference type="PANTHER" id="PTHR13501">
    <property type="entry name" value="CHLOROPLAST 50S RIBOSOMAL PROTEIN L22-RELATED"/>
    <property type="match status" value="1"/>
</dbReference>
<dbReference type="PANTHER" id="PTHR13501:SF8">
    <property type="entry name" value="LARGE RIBOSOMAL SUBUNIT PROTEIN UL22M"/>
    <property type="match status" value="1"/>
</dbReference>
<dbReference type="Pfam" id="PF00237">
    <property type="entry name" value="Ribosomal_L22"/>
    <property type="match status" value="1"/>
</dbReference>
<dbReference type="SUPFAM" id="SSF54843">
    <property type="entry name" value="Ribosomal protein L22"/>
    <property type="match status" value="1"/>
</dbReference>
<dbReference type="PROSITE" id="PS00464">
    <property type="entry name" value="RIBOSOMAL_L22"/>
    <property type="match status" value="1"/>
</dbReference>
<reference key="1">
    <citation type="journal article" date="2001" name="Science">
        <title>Comparative genomics of Listeria species.</title>
        <authorList>
            <person name="Glaser P."/>
            <person name="Frangeul L."/>
            <person name="Buchrieser C."/>
            <person name="Rusniok C."/>
            <person name="Amend A."/>
            <person name="Baquero F."/>
            <person name="Berche P."/>
            <person name="Bloecker H."/>
            <person name="Brandt P."/>
            <person name="Chakraborty T."/>
            <person name="Charbit A."/>
            <person name="Chetouani F."/>
            <person name="Couve E."/>
            <person name="de Daruvar A."/>
            <person name="Dehoux P."/>
            <person name="Domann E."/>
            <person name="Dominguez-Bernal G."/>
            <person name="Duchaud E."/>
            <person name="Durant L."/>
            <person name="Dussurget O."/>
            <person name="Entian K.-D."/>
            <person name="Fsihi H."/>
            <person name="Garcia-del Portillo F."/>
            <person name="Garrido P."/>
            <person name="Gautier L."/>
            <person name="Goebel W."/>
            <person name="Gomez-Lopez N."/>
            <person name="Hain T."/>
            <person name="Hauf J."/>
            <person name="Jackson D."/>
            <person name="Jones L.-M."/>
            <person name="Kaerst U."/>
            <person name="Kreft J."/>
            <person name="Kuhn M."/>
            <person name="Kunst F."/>
            <person name="Kurapkat G."/>
            <person name="Madueno E."/>
            <person name="Maitournam A."/>
            <person name="Mata Vicente J."/>
            <person name="Ng E."/>
            <person name="Nedjari H."/>
            <person name="Nordsiek G."/>
            <person name="Novella S."/>
            <person name="de Pablos B."/>
            <person name="Perez-Diaz J.-C."/>
            <person name="Purcell R."/>
            <person name="Remmel B."/>
            <person name="Rose M."/>
            <person name="Schlueter T."/>
            <person name="Simoes N."/>
            <person name="Tierrez A."/>
            <person name="Vazquez-Boland J.-A."/>
            <person name="Voss H."/>
            <person name="Wehland J."/>
            <person name="Cossart P."/>
        </authorList>
    </citation>
    <scope>NUCLEOTIDE SEQUENCE [LARGE SCALE GENOMIC DNA]</scope>
    <source>
        <strain>ATCC BAA-679 / EGD-e</strain>
    </source>
</reference>
<proteinExistence type="evidence at protein level"/>
<keyword id="KW-0002">3D-structure</keyword>
<keyword id="KW-1185">Reference proteome</keyword>
<keyword id="KW-0687">Ribonucleoprotein</keyword>
<keyword id="KW-0689">Ribosomal protein</keyword>
<keyword id="KW-0694">RNA-binding</keyword>
<keyword id="KW-0699">rRNA-binding</keyword>
<name>RL22_LISMO</name>
<organism>
    <name type="scientific">Listeria monocytogenes serovar 1/2a (strain ATCC BAA-679 / EGD-e)</name>
    <dbReference type="NCBI Taxonomy" id="169963"/>
    <lineage>
        <taxon>Bacteria</taxon>
        <taxon>Bacillati</taxon>
        <taxon>Bacillota</taxon>
        <taxon>Bacilli</taxon>
        <taxon>Bacillales</taxon>
        <taxon>Listeriaceae</taxon>
        <taxon>Listeria</taxon>
    </lineage>
</organism>
<gene>
    <name evidence="1" type="primary">rplV</name>
    <name type="ordered locus">lmo2627</name>
</gene>
<accession>Q927L2</accession>
<sequence length="118" mass="12874">MASEVTSAKAVAKTVRIAPRKARIVIDLIRGKQVGEAIAILKYTPRSASPIIEKVLKSAIANAEHNYDLDINNLVVEEAFVDEGPTLKRFRPRAQGRASAINKRTSHITVVVSEVKEG</sequence>
<evidence type="ECO:0000255" key="1">
    <source>
        <dbReference type="HAMAP-Rule" id="MF_01331"/>
    </source>
</evidence>
<evidence type="ECO:0000305" key="2"/>
<evidence type="ECO:0007829" key="3">
    <source>
        <dbReference type="PDB" id="8A57"/>
    </source>
</evidence>
<evidence type="ECO:0007829" key="4">
    <source>
        <dbReference type="PDB" id="8A5I"/>
    </source>
</evidence>
<feature type="chain" id="PRO_0000125172" description="Large ribosomal subunit protein uL22">
    <location>
        <begin position="1"/>
        <end position="118"/>
    </location>
</feature>
<feature type="strand" evidence="3">
    <location>
        <begin position="7"/>
        <end position="17"/>
    </location>
</feature>
<feature type="helix" evidence="3">
    <location>
        <begin position="19"/>
        <end position="29"/>
    </location>
</feature>
<feature type="helix" evidence="3">
    <location>
        <begin position="34"/>
        <end position="42"/>
    </location>
</feature>
<feature type="helix" evidence="3">
    <location>
        <begin position="48"/>
        <end position="65"/>
    </location>
</feature>
<feature type="helix" evidence="4">
    <location>
        <begin position="71"/>
        <end position="73"/>
    </location>
</feature>
<feature type="strand" evidence="3">
    <location>
        <begin position="75"/>
        <end position="83"/>
    </location>
</feature>
<feature type="strand" evidence="3">
    <location>
        <begin position="87"/>
        <end position="92"/>
    </location>
</feature>
<feature type="strand" evidence="3">
    <location>
        <begin position="98"/>
        <end position="103"/>
    </location>
</feature>
<feature type="strand" evidence="3">
    <location>
        <begin position="105"/>
        <end position="113"/>
    </location>
</feature>
<comment type="function">
    <text evidence="1">This protein binds specifically to 23S rRNA; its binding is stimulated by other ribosomal proteins, e.g. L4, L17, and L20. It is important during the early stages of 50S assembly. It makes multiple contacts with different domains of the 23S rRNA in the assembled 50S subunit and ribosome (By similarity).</text>
</comment>
<comment type="function">
    <text evidence="1">The globular domain of the protein is located near the polypeptide exit tunnel on the outside of the subunit, while an extended beta-hairpin is found that lines the wall of the exit tunnel in the center of the 70S ribosome.</text>
</comment>
<comment type="subunit">
    <text evidence="1">Part of the 50S ribosomal subunit.</text>
</comment>
<comment type="similarity">
    <text evidence="1">Belongs to the universal ribosomal protein uL22 family.</text>
</comment>